<name>GCSH_METC4</name>
<accession>B7L0K9</accession>
<evidence type="ECO:0000255" key="1">
    <source>
        <dbReference type="HAMAP-Rule" id="MF_00272"/>
    </source>
</evidence>
<evidence type="ECO:0000255" key="2">
    <source>
        <dbReference type="PROSITE-ProRule" id="PRU01066"/>
    </source>
</evidence>
<dbReference type="EMBL" id="CP001298">
    <property type="protein sequence ID" value="ACK81732.1"/>
    <property type="molecule type" value="Genomic_DNA"/>
</dbReference>
<dbReference type="RefSeq" id="WP_012605831.1">
    <property type="nucleotide sequence ID" value="NC_011757.1"/>
</dbReference>
<dbReference type="SMR" id="B7L0K9"/>
<dbReference type="GeneID" id="72988216"/>
<dbReference type="KEGG" id="mch:Mchl_0813"/>
<dbReference type="HOGENOM" id="CLU_097408_2_2_5"/>
<dbReference type="Proteomes" id="UP000002385">
    <property type="component" value="Chromosome"/>
</dbReference>
<dbReference type="GO" id="GO:0005737">
    <property type="term" value="C:cytoplasm"/>
    <property type="evidence" value="ECO:0007669"/>
    <property type="project" value="TreeGrafter"/>
</dbReference>
<dbReference type="GO" id="GO:0005960">
    <property type="term" value="C:glycine cleavage complex"/>
    <property type="evidence" value="ECO:0007669"/>
    <property type="project" value="InterPro"/>
</dbReference>
<dbReference type="GO" id="GO:0019464">
    <property type="term" value="P:glycine decarboxylation via glycine cleavage system"/>
    <property type="evidence" value="ECO:0007669"/>
    <property type="project" value="UniProtKB-UniRule"/>
</dbReference>
<dbReference type="CDD" id="cd06848">
    <property type="entry name" value="GCS_H"/>
    <property type="match status" value="1"/>
</dbReference>
<dbReference type="Gene3D" id="2.40.50.100">
    <property type="match status" value="1"/>
</dbReference>
<dbReference type="HAMAP" id="MF_00272">
    <property type="entry name" value="GcvH"/>
    <property type="match status" value="1"/>
</dbReference>
<dbReference type="InterPro" id="IPR003016">
    <property type="entry name" value="2-oxoA_DH_lipoyl-BS"/>
</dbReference>
<dbReference type="InterPro" id="IPR000089">
    <property type="entry name" value="Biotin_lipoyl"/>
</dbReference>
<dbReference type="InterPro" id="IPR002930">
    <property type="entry name" value="GCV_H"/>
</dbReference>
<dbReference type="InterPro" id="IPR033753">
    <property type="entry name" value="GCV_H/Fam206"/>
</dbReference>
<dbReference type="InterPro" id="IPR017453">
    <property type="entry name" value="GCV_H_sub"/>
</dbReference>
<dbReference type="InterPro" id="IPR011053">
    <property type="entry name" value="Single_hybrid_motif"/>
</dbReference>
<dbReference type="NCBIfam" id="TIGR00527">
    <property type="entry name" value="gcvH"/>
    <property type="match status" value="1"/>
</dbReference>
<dbReference type="NCBIfam" id="NF002270">
    <property type="entry name" value="PRK01202.1"/>
    <property type="match status" value="1"/>
</dbReference>
<dbReference type="PANTHER" id="PTHR11715">
    <property type="entry name" value="GLYCINE CLEAVAGE SYSTEM H PROTEIN"/>
    <property type="match status" value="1"/>
</dbReference>
<dbReference type="PANTHER" id="PTHR11715:SF3">
    <property type="entry name" value="GLYCINE CLEAVAGE SYSTEM H PROTEIN-RELATED"/>
    <property type="match status" value="1"/>
</dbReference>
<dbReference type="Pfam" id="PF01597">
    <property type="entry name" value="GCV_H"/>
    <property type="match status" value="1"/>
</dbReference>
<dbReference type="SUPFAM" id="SSF51230">
    <property type="entry name" value="Single hybrid motif"/>
    <property type="match status" value="1"/>
</dbReference>
<dbReference type="PROSITE" id="PS50968">
    <property type="entry name" value="BIOTINYL_LIPOYL"/>
    <property type="match status" value="1"/>
</dbReference>
<dbReference type="PROSITE" id="PS00189">
    <property type="entry name" value="LIPOYL"/>
    <property type="match status" value="1"/>
</dbReference>
<sequence length="120" mass="12634">MLRFTDEHEWLRLDGDVATVGITAHAAEQLGDLVFVELPKVGAKLTKGEAAAVVESVKAASDVYAPLSGEVTEVNEAAVADPASVGTDPQGGGWLYRLKLDDPSAMDELMDEAAYAAFAK</sequence>
<organism>
    <name type="scientific">Methylorubrum extorquens (strain CM4 / NCIMB 13688)</name>
    <name type="common">Methylobacterium extorquens</name>
    <dbReference type="NCBI Taxonomy" id="440085"/>
    <lineage>
        <taxon>Bacteria</taxon>
        <taxon>Pseudomonadati</taxon>
        <taxon>Pseudomonadota</taxon>
        <taxon>Alphaproteobacteria</taxon>
        <taxon>Hyphomicrobiales</taxon>
        <taxon>Methylobacteriaceae</taxon>
        <taxon>Methylorubrum</taxon>
    </lineage>
</organism>
<protein>
    <recommendedName>
        <fullName evidence="1">Glycine cleavage system H protein</fullName>
    </recommendedName>
</protein>
<reference key="1">
    <citation type="submission" date="2008-12" db="EMBL/GenBank/DDBJ databases">
        <title>Complete sequence of chromosome of Methylobacterium chloromethanicum CM4.</title>
        <authorList>
            <consortium name="US DOE Joint Genome Institute"/>
            <person name="Lucas S."/>
            <person name="Copeland A."/>
            <person name="Lapidus A."/>
            <person name="Glavina del Rio T."/>
            <person name="Dalin E."/>
            <person name="Tice H."/>
            <person name="Bruce D."/>
            <person name="Goodwin L."/>
            <person name="Pitluck S."/>
            <person name="Chertkov O."/>
            <person name="Brettin T."/>
            <person name="Detter J.C."/>
            <person name="Han C."/>
            <person name="Larimer F."/>
            <person name="Land M."/>
            <person name="Hauser L."/>
            <person name="Kyrpides N."/>
            <person name="Mikhailova N."/>
            <person name="Marx C."/>
            <person name="Richardson P."/>
        </authorList>
    </citation>
    <scope>NUCLEOTIDE SEQUENCE [LARGE SCALE GENOMIC DNA]</scope>
    <source>
        <strain>CM4 / NCIMB 13688</strain>
    </source>
</reference>
<gene>
    <name evidence="1" type="primary">gcvH</name>
    <name type="ordered locus">Mchl_0813</name>
</gene>
<feature type="chain" id="PRO_1000132424" description="Glycine cleavage system H protein">
    <location>
        <begin position="1"/>
        <end position="120"/>
    </location>
</feature>
<feature type="domain" description="Lipoyl-binding" evidence="2">
    <location>
        <begin position="17"/>
        <end position="99"/>
    </location>
</feature>
<feature type="modified residue" description="N6-lipoyllysine" evidence="1">
    <location>
        <position position="58"/>
    </location>
</feature>
<comment type="function">
    <text evidence="1">The glycine cleavage system catalyzes the degradation of glycine. The H protein shuttles the methylamine group of glycine from the P protein to the T protein.</text>
</comment>
<comment type="cofactor">
    <cofactor evidence="1">
        <name>(R)-lipoate</name>
        <dbReference type="ChEBI" id="CHEBI:83088"/>
    </cofactor>
    <text evidence="1">Binds 1 lipoyl cofactor covalently.</text>
</comment>
<comment type="subunit">
    <text evidence="1">The glycine cleavage system is composed of four proteins: P, T, L and H.</text>
</comment>
<comment type="similarity">
    <text evidence="1">Belongs to the GcvH family.</text>
</comment>
<proteinExistence type="inferred from homology"/>
<keyword id="KW-0450">Lipoyl</keyword>